<sequence length="574" mass="62372">MRETPEREEEPGTEAPCAASCHAQRILQTLNAYRRSGTLTDVVLRAGGRDFPCHRAALSAASAHFRGLFAAGRPERAAAVVPVGPETPGTAAALAVVLDYVYGAGVRLRAEDEAAAVLALAERLGVAGLREACARFLEGRLRAANSLALRRVAAAFSLASLAERCGRVLRQAFVEVTRHADFLELAPDEVAALLADPALRVAREEAVFEAAMRWVRHDAPARRGQLRRLLEHVRLPLLAPAYFLEKVEADELLQACGDCRPLLLEARACFILGREAGALRARPRRFMDLAEVIVVIGGCDRKGLLKLPFADAYHPESQRWTPLPSLPGYTRSEFASCALRNDIYVSGGHINSRDVWMFSSHLNTWIKVASMHKGRWRHKMVALQGQLFAVGGFDGLRRLRSVERYDPFSNTWAAIAPLPEAVSSAAVAPCAGQLYVIGGAGQDGVNTDKVQCFDPKEDQWSLRSPAPFLQRCLEAVSLEDTIYVVGGLMSKIFTYDPGSDVWREAADLPSPVESCGVTVCDGKVHILGGRDEHGESTSSVFTFDPGTGQVEAQPSLQRCTSSHGCVTIVQSLSR</sequence>
<organism>
    <name type="scientific">Mus musculus</name>
    <name type="common">Mouse</name>
    <dbReference type="NCBI Taxonomy" id="10090"/>
    <lineage>
        <taxon>Eukaryota</taxon>
        <taxon>Metazoa</taxon>
        <taxon>Chordata</taxon>
        <taxon>Craniata</taxon>
        <taxon>Vertebrata</taxon>
        <taxon>Euteleostomi</taxon>
        <taxon>Mammalia</taxon>
        <taxon>Eutheria</taxon>
        <taxon>Euarchontoglires</taxon>
        <taxon>Glires</taxon>
        <taxon>Rodentia</taxon>
        <taxon>Myomorpha</taxon>
        <taxon>Muroidea</taxon>
        <taxon>Muridae</taxon>
        <taxon>Murinae</taxon>
        <taxon>Mus</taxon>
        <taxon>Mus</taxon>
    </lineage>
</organism>
<keyword id="KW-0880">Kelch repeat</keyword>
<keyword id="KW-1185">Reference proteome</keyword>
<keyword id="KW-0677">Repeat</keyword>
<name>KLH35_MOUSE</name>
<gene>
    <name type="primary">Klhl35</name>
</gene>
<dbReference type="EMBL" id="AK013012">
    <property type="protein sequence ID" value="BAB28596.1"/>
    <property type="molecule type" value="mRNA"/>
</dbReference>
<dbReference type="EMBL" id="AC115858">
    <property type="status" value="NOT_ANNOTATED_CDS"/>
    <property type="molecule type" value="Genomic_DNA"/>
</dbReference>
<dbReference type="CCDS" id="CCDS52320.1"/>
<dbReference type="RefSeq" id="NP_082421.1">
    <property type="nucleotide sequence ID" value="NM_028145.1"/>
</dbReference>
<dbReference type="SMR" id="Q9CZ49"/>
<dbReference type="BioGRID" id="215206">
    <property type="interactions" value="2"/>
</dbReference>
<dbReference type="FunCoup" id="Q9CZ49">
    <property type="interactions" value="4"/>
</dbReference>
<dbReference type="STRING" id="10090.ENSMUSP00000041363"/>
<dbReference type="GlyGen" id="Q9CZ49">
    <property type="glycosylation" value="2 sites, 1 O-linked glycan (2 sites)"/>
</dbReference>
<dbReference type="iPTMnet" id="Q9CZ49"/>
<dbReference type="PhosphoSitePlus" id="Q9CZ49"/>
<dbReference type="PaxDb" id="10090-ENSMUSP00000041363"/>
<dbReference type="ProteomicsDB" id="265004"/>
<dbReference type="Antibodypedia" id="45083">
    <property type="antibodies" value="111 antibodies from 19 providers"/>
</dbReference>
<dbReference type="Ensembl" id="ENSMUST00000037359.9">
    <property type="protein sequence ID" value="ENSMUSP00000041363.3"/>
    <property type="gene ID" value="ENSMUSG00000035298.9"/>
</dbReference>
<dbReference type="GeneID" id="72184"/>
<dbReference type="KEGG" id="mmu:72184"/>
<dbReference type="UCSC" id="uc009ilq.2">
    <property type="organism name" value="mouse"/>
</dbReference>
<dbReference type="AGR" id="MGI:1919434"/>
<dbReference type="CTD" id="283212"/>
<dbReference type="MGI" id="MGI:1919434">
    <property type="gene designation" value="Klhl35"/>
</dbReference>
<dbReference type="VEuPathDB" id="HostDB:ENSMUSG00000035298"/>
<dbReference type="eggNOG" id="KOG4441">
    <property type="taxonomic scope" value="Eukaryota"/>
</dbReference>
<dbReference type="GeneTree" id="ENSGT00940000161093"/>
<dbReference type="HOGENOM" id="CLU_004253_14_6_1"/>
<dbReference type="InParanoid" id="Q9CZ49"/>
<dbReference type="OMA" id="GCEAPCA"/>
<dbReference type="OrthoDB" id="19132at2759"/>
<dbReference type="PhylomeDB" id="Q9CZ49"/>
<dbReference type="TreeFam" id="TF351654"/>
<dbReference type="BioGRID-ORCS" id="72184">
    <property type="hits" value="3 hits in 79 CRISPR screens"/>
</dbReference>
<dbReference type="PRO" id="PR:Q9CZ49"/>
<dbReference type="Proteomes" id="UP000000589">
    <property type="component" value="Chromosome 7"/>
</dbReference>
<dbReference type="RNAct" id="Q9CZ49">
    <property type="molecule type" value="protein"/>
</dbReference>
<dbReference type="Bgee" id="ENSMUSG00000035298">
    <property type="expression patterns" value="Expressed in spermatocyte and 42 other cell types or tissues"/>
</dbReference>
<dbReference type="ExpressionAtlas" id="Q9CZ49">
    <property type="expression patterns" value="baseline and differential"/>
</dbReference>
<dbReference type="CDD" id="cd18265">
    <property type="entry name" value="BTB_POZ_KLHL35"/>
    <property type="match status" value="1"/>
</dbReference>
<dbReference type="FunFam" id="1.25.40.420:FF:000001">
    <property type="entry name" value="Kelch-like family member 12"/>
    <property type="match status" value="1"/>
</dbReference>
<dbReference type="Gene3D" id="1.25.40.420">
    <property type="match status" value="1"/>
</dbReference>
<dbReference type="Gene3D" id="2.120.10.80">
    <property type="entry name" value="Kelch-type beta propeller"/>
    <property type="match status" value="1"/>
</dbReference>
<dbReference type="Gene3D" id="3.30.710.10">
    <property type="entry name" value="Potassium Channel Kv1.1, Chain A"/>
    <property type="match status" value="1"/>
</dbReference>
<dbReference type="InterPro" id="IPR011705">
    <property type="entry name" value="BACK"/>
</dbReference>
<dbReference type="InterPro" id="IPR017096">
    <property type="entry name" value="BTB-kelch_protein"/>
</dbReference>
<dbReference type="InterPro" id="IPR000210">
    <property type="entry name" value="BTB/POZ_dom"/>
</dbReference>
<dbReference type="InterPro" id="IPR015915">
    <property type="entry name" value="Kelch-typ_b-propeller"/>
</dbReference>
<dbReference type="InterPro" id="IPR006652">
    <property type="entry name" value="Kelch_1"/>
</dbReference>
<dbReference type="InterPro" id="IPR030601">
    <property type="entry name" value="KLHL35_BTB_POZ_dom"/>
</dbReference>
<dbReference type="InterPro" id="IPR011333">
    <property type="entry name" value="SKP1/BTB/POZ_sf"/>
</dbReference>
<dbReference type="PANTHER" id="PTHR24412">
    <property type="entry name" value="KELCH PROTEIN"/>
    <property type="match status" value="1"/>
</dbReference>
<dbReference type="PANTHER" id="PTHR24412:SF187">
    <property type="entry name" value="KELCH-LIKE PROTEIN 35"/>
    <property type="match status" value="1"/>
</dbReference>
<dbReference type="Pfam" id="PF07707">
    <property type="entry name" value="BACK"/>
    <property type="match status" value="1"/>
</dbReference>
<dbReference type="Pfam" id="PF00651">
    <property type="entry name" value="BTB"/>
    <property type="match status" value="1"/>
</dbReference>
<dbReference type="Pfam" id="PF01344">
    <property type="entry name" value="Kelch_1"/>
    <property type="match status" value="1"/>
</dbReference>
<dbReference type="Pfam" id="PF24681">
    <property type="entry name" value="Kelch_KLHDC2_KLHL20_DRC7"/>
    <property type="match status" value="1"/>
</dbReference>
<dbReference type="PIRSF" id="PIRSF037037">
    <property type="entry name" value="Kelch-like_protein_gigaxonin"/>
    <property type="match status" value="1"/>
</dbReference>
<dbReference type="SMART" id="SM00875">
    <property type="entry name" value="BACK"/>
    <property type="match status" value="1"/>
</dbReference>
<dbReference type="SMART" id="SM00225">
    <property type="entry name" value="BTB"/>
    <property type="match status" value="1"/>
</dbReference>
<dbReference type="SMART" id="SM00612">
    <property type="entry name" value="Kelch"/>
    <property type="match status" value="6"/>
</dbReference>
<dbReference type="SUPFAM" id="SSF117281">
    <property type="entry name" value="Kelch motif"/>
    <property type="match status" value="1"/>
</dbReference>
<dbReference type="SUPFAM" id="SSF54695">
    <property type="entry name" value="POZ domain"/>
    <property type="match status" value="1"/>
</dbReference>
<dbReference type="PROSITE" id="PS50097">
    <property type="entry name" value="BTB"/>
    <property type="match status" value="1"/>
</dbReference>
<reference key="1">
    <citation type="journal article" date="2005" name="Science">
        <title>The transcriptional landscape of the mammalian genome.</title>
        <authorList>
            <person name="Carninci P."/>
            <person name="Kasukawa T."/>
            <person name="Katayama S."/>
            <person name="Gough J."/>
            <person name="Frith M.C."/>
            <person name="Maeda N."/>
            <person name="Oyama R."/>
            <person name="Ravasi T."/>
            <person name="Lenhard B."/>
            <person name="Wells C."/>
            <person name="Kodzius R."/>
            <person name="Shimokawa K."/>
            <person name="Bajic V.B."/>
            <person name="Brenner S.E."/>
            <person name="Batalov S."/>
            <person name="Forrest A.R."/>
            <person name="Zavolan M."/>
            <person name="Davis M.J."/>
            <person name="Wilming L.G."/>
            <person name="Aidinis V."/>
            <person name="Allen J.E."/>
            <person name="Ambesi-Impiombato A."/>
            <person name="Apweiler R."/>
            <person name="Aturaliya R.N."/>
            <person name="Bailey T.L."/>
            <person name="Bansal M."/>
            <person name="Baxter L."/>
            <person name="Beisel K.W."/>
            <person name="Bersano T."/>
            <person name="Bono H."/>
            <person name="Chalk A.M."/>
            <person name="Chiu K.P."/>
            <person name="Choudhary V."/>
            <person name="Christoffels A."/>
            <person name="Clutterbuck D.R."/>
            <person name="Crowe M.L."/>
            <person name="Dalla E."/>
            <person name="Dalrymple B.P."/>
            <person name="de Bono B."/>
            <person name="Della Gatta G."/>
            <person name="di Bernardo D."/>
            <person name="Down T."/>
            <person name="Engstrom P."/>
            <person name="Fagiolini M."/>
            <person name="Faulkner G."/>
            <person name="Fletcher C.F."/>
            <person name="Fukushima T."/>
            <person name="Furuno M."/>
            <person name="Futaki S."/>
            <person name="Gariboldi M."/>
            <person name="Georgii-Hemming P."/>
            <person name="Gingeras T.R."/>
            <person name="Gojobori T."/>
            <person name="Green R.E."/>
            <person name="Gustincich S."/>
            <person name="Harbers M."/>
            <person name="Hayashi Y."/>
            <person name="Hensch T.K."/>
            <person name="Hirokawa N."/>
            <person name="Hill D."/>
            <person name="Huminiecki L."/>
            <person name="Iacono M."/>
            <person name="Ikeo K."/>
            <person name="Iwama A."/>
            <person name="Ishikawa T."/>
            <person name="Jakt M."/>
            <person name="Kanapin A."/>
            <person name="Katoh M."/>
            <person name="Kawasawa Y."/>
            <person name="Kelso J."/>
            <person name="Kitamura H."/>
            <person name="Kitano H."/>
            <person name="Kollias G."/>
            <person name="Krishnan S.P."/>
            <person name="Kruger A."/>
            <person name="Kummerfeld S.K."/>
            <person name="Kurochkin I.V."/>
            <person name="Lareau L.F."/>
            <person name="Lazarevic D."/>
            <person name="Lipovich L."/>
            <person name="Liu J."/>
            <person name="Liuni S."/>
            <person name="McWilliam S."/>
            <person name="Madan Babu M."/>
            <person name="Madera M."/>
            <person name="Marchionni L."/>
            <person name="Matsuda H."/>
            <person name="Matsuzawa S."/>
            <person name="Miki H."/>
            <person name="Mignone F."/>
            <person name="Miyake S."/>
            <person name="Morris K."/>
            <person name="Mottagui-Tabar S."/>
            <person name="Mulder N."/>
            <person name="Nakano N."/>
            <person name="Nakauchi H."/>
            <person name="Ng P."/>
            <person name="Nilsson R."/>
            <person name="Nishiguchi S."/>
            <person name="Nishikawa S."/>
            <person name="Nori F."/>
            <person name="Ohara O."/>
            <person name="Okazaki Y."/>
            <person name="Orlando V."/>
            <person name="Pang K.C."/>
            <person name="Pavan W.J."/>
            <person name="Pavesi G."/>
            <person name="Pesole G."/>
            <person name="Petrovsky N."/>
            <person name="Piazza S."/>
            <person name="Reed J."/>
            <person name="Reid J.F."/>
            <person name="Ring B.Z."/>
            <person name="Ringwald M."/>
            <person name="Rost B."/>
            <person name="Ruan Y."/>
            <person name="Salzberg S.L."/>
            <person name="Sandelin A."/>
            <person name="Schneider C."/>
            <person name="Schoenbach C."/>
            <person name="Sekiguchi K."/>
            <person name="Semple C.A."/>
            <person name="Seno S."/>
            <person name="Sessa L."/>
            <person name="Sheng Y."/>
            <person name="Shibata Y."/>
            <person name="Shimada H."/>
            <person name="Shimada K."/>
            <person name="Silva D."/>
            <person name="Sinclair B."/>
            <person name="Sperling S."/>
            <person name="Stupka E."/>
            <person name="Sugiura K."/>
            <person name="Sultana R."/>
            <person name="Takenaka Y."/>
            <person name="Taki K."/>
            <person name="Tammoja K."/>
            <person name="Tan S.L."/>
            <person name="Tang S."/>
            <person name="Taylor M.S."/>
            <person name="Tegner J."/>
            <person name="Teichmann S.A."/>
            <person name="Ueda H.R."/>
            <person name="van Nimwegen E."/>
            <person name="Verardo R."/>
            <person name="Wei C.L."/>
            <person name="Yagi K."/>
            <person name="Yamanishi H."/>
            <person name="Zabarovsky E."/>
            <person name="Zhu S."/>
            <person name="Zimmer A."/>
            <person name="Hide W."/>
            <person name="Bult C."/>
            <person name="Grimmond S.M."/>
            <person name="Teasdale R.D."/>
            <person name="Liu E.T."/>
            <person name="Brusic V."/>
            <person name="Quackenbush J."/>
            <person name="Wahlestedt C."/>
            <person name="Mattick J.S."/>
            <person name="Hume D.A."/>
            <person name="Kai C."/>
            <person name="Sasaki D."/>
            <person name="Tomaru Y."/>
            <person name="Fukuda S."/>
            <person name="Kanamori-Katayama M."/>
            <person name="Suzuki M."/>
            <person name="Aoki J."/>
            <person name="Arakawa T."/>
            <person name="Iida J."/>
            <person name="Imamura K."/>
            <person name="Itoh M."/>
            <person name="Kato T."/>
            <person name="Kawaji H."/>
            <person name="Kawagashira N."/>
            <person name="Kawashima T."/>
            <person name="Kojima M."/>
            <person name="Kondo S."/>
            <person name="Konno H."/>
            <person name="Nakano K."/>
            <person name="Ninomiya N."/>
            <person name="Nishio T."/>
            <person name="Okada M."/>
            <person name="Plessy C."/>
            <person name="Shibata K."/>
            <person name="Shiraki T."/>
            <person name="Suzuki S."/>
            <person name="Tagami M."/>
            <person name="Waki K."/>
            <person name="Watahiki A."/>
            <person name="Okamura-Oho Y."/>
            <person name="Suzuki H."/>
            <person name="Kawai J."/>
            <person name="Hayashizaki Y."/>
        </authorList>
    </citation>
    <scope>NUCLEOTIDE SEQUENCE [LARGE SCALE MRNA]</scope>
    <source>
        <strain>C57BL/6J</strain>
    </source>
</reference>
<reference key="2">
    <citation type="journal article" date="2009" name="PLoS Biol.">
        <title>Lineage-specific biology revealed by a finished genome assembly of the mouse.</title>
        <authorList>
            <person name="Church D.M."/>
            <person name="Goodstadt L."/>
            <person name="Hillier L.W."/>
            <person name="Zody M.C."/>
            <person name="Goldstein S."/>
            <person name="She X."/>
            <person name="Bult C.J."/>
            <person name="Agarwala R."/>
            <person name="Cherry J.L."/>
            <person name="DiCuccio M."/>
            <person name="Hlavina W."/>
            <person name="Kapustin Y."/>
            <person name="Meric P."/>
            <person name="Maglott D."/>
            <person name="Birtle Z."/>
            <person name="Marques A.C."/>
            <person name="Graves T."/>
            <person name="Zhou S."/>
            <person name="Teague B."/>
            <person name="Potamousis K."/>
            <person name="Churas C."/>
            <person name="Place M."/>
            <person name="Herschleb J."/>
            <person name="Runnheim R."/>
            <person name="Forrest D."/>
            <person name="Amos-Landgraf J."/>
            <person name="Schwartz D.C."/>
            <person name="Cheng Z."/>
            <person name="Lindblad-Toh K."/>
            <person name="Eichler E.E."/>
            <person name="Ponting C.P."/>
        </authorList>
    </citation>
    <scope>NUCLEOTIDE SEQUENCE [LARGE SCALE GENOMIC DNA]</scope>
    <source>
        <strain>C57BL/6J</strain>
    </source>
</reference>
<evidence type="ECO:0000255" key="1">
    <source>
        <dbReference type="PROSITE-ProRule" id="PRU00037"/>
    </source>
</evidence>
<evidence type="ECO:0000305" key="2"/>
<accession>Q9CZ49</accession>
<accession>E9QMG1</accession>
<feature type="chain" id="PRO_0000344467" description="Kelch-like protein 35">
    <location>
        <begin position="1"/>
        <end position="574"/>
    </location>
</feature>
<feature type="domain" description="BTB" evidence="1">
    <location>
        <begin position="40"/>
        <end position="110"/>
    </location>
</feature>
<feature type="domain" description="BACK">
    <location>
        <begin position="146"/>
        <end position="248"/>
    </location>
</feature>
<feature type="repeat" description="Kelch 1">
    <location>
        <begin position="292"/>
        <end position="341"/>
    </location>
</feature>
<feature type="repeat" description="Kelch 2">
    <location>
        <begin position="343"/>
        <end position="385"/>
    </location>
</feature>
<feature type="repeat" description="Kelch 3">
    <location>
        <begin position="386"/>
        <end position="432"/>
    </location>
</feature>
<feature type="repeat" description="Kelch 4">
    <location>
        <begin position="434"/>
        <end position="480"/>
    </location>
</feature>
<feature type="repeat" description="Kelch 5">
    <location>
        <begin position="481"/>
        <end position="522"/>
    </location>
</feature>
<feature type="repeat" description="Kelch 6">
    <location>
        <begin position="524"/>
        <end position="570"/>
    </location>
</feature>
<feature type="sequence conflict" description="In Ref. 1; BAB28596." evidence="2" ref="1">
    <original>V</original>
    <variation>L</variation>
    <location>
        <position position="168"/>
    </location>
</feature>
<protein>
    <recommendedName>
        <fullName>Kelch-like protein 35</fullName>
    </recommendedName>
</protein>
<proteinExistence type="evidence at transcript level"/>